<accession>A4X9F8</accession>
<proteinExistence type="inferred from homology"/>
<feature type="chain" id="PRO_0000346071" description="Protoheme IX farnesyltransferase">
    <location>
        <begin position="1"/>
        <end position="320"/>
    </location>
</feature>
<feature type="transmembrane region" description="Helical" evidence="1">
    <location>
        <begin position="33"/>
        <end position="55"/>
    </location>
</feature>
<feature type="transmembrane region" description="Helical" evidence="1">
    <location>
        <begin position="68"/>
        <end position="88"/>
    </location>
</feature>
<feature type="transmembrane region" description="Helical" evidence="1">
    <location>
        <begin position="117"/>
        <end position="137"/>
    </location>
</feature>
<feature type="transmembrane region" description="Helical" evidence="1">
    <location>
        <begin position="140"/>
        <end position="160"/>
    </location>
</feature>
<feature type="transmembrane region" description="Helical" evidence="1">
    <location>
        <begin position="183"/>
        <end position="203"/>
    </location>
</feature>
<feature type="transmembrane region" description="Helical" evidence="1">
    <location>
        <begin position="241"/>
        <end position="261"/>
    </location>
</feature>
<feature type="transmembrane region" description="Helical" evidence="1">
    <location>
        <begin position="262"/>
        <end position="282"/>
    </location>
</feature>
<feature type="transmembrane region" description="Helical" evidence="1">
    <location>
        <begin position="300"/>
        <end position="320"/>
    </location>
</feature>
<feature type="region of interest" description="Disordered" evidence="2">
    <location>
        <begin position="1"/>
        <end position="24"/>
    </location>
</feature>
<evidence type="ECO:0000255" key="1">
    <source>
        <dbReference type="HAMAP-Rule" id="MF_00154"/>
    </source>
</evidence>
<evidence type="ECO:0000256" key="2">
    <source>
        <dbReference type="SAM" id="MobiDB-lite"/>
    </source>
</evidence>
<evidence type="ECO:0000305" key="3"/>
<keyword id="KW-1003">Cell membrane</keyword>
<keyword id="KW-0350">Heme biosynthesis</keyword>
<keyword id="KW-0472">Membrane</keyword>
<keyword id="KW-1185">Reference proteome</keyword>
<keyword id="KW-0808">Transferase</keyword>
<keyword id="KW-0812">Transmembrane</keyword>
<keyword id="KW-1133">Transmembrane helix</keyword>
<dbReference type="EC" id="2.5.1.141" evidence="1"/>
<dbReference type="EMBL" id="CP000667">
    <property type="protein sequence ID" value="ABP55525.1"/>
    <property type="status" value="ALT_INIT"/>
    <property type="molecule type" value="Genomic_DNA"/>
</dbReference>
<dbReference type="RefSeq" id="WP_026275272.1">
    <property type="nucleotide sequence ID" value="NC_009380.1"/>
</dbReference>
<dbReference type="SMR" id="A4X9F8"/>
<dbReference type="STRING" id="369723.Strop_3088"/>
<dbReference type="KEGG" id="stp:Strop_3088"/>
<dbReference type="PATRIC" id="fig|369723.5.peg.3178"/>
<dbReference type="eggNOG" id="COG0109">
    <property type="taxonomic scope" value="Bacteria"/>
</dbReference>
<dbReference type="HOGENOM" id="CLU_029631_0_1_11"/>
<dbReference type="UniPathway" id="UPA00834">
    <property type="reaction ID" value="UER00712"/>
</dbReference>
<dbReference type="Proteomes" id="UP000000235">
    <property type="component" value="Chromosome"/>
</dbReference>
<dbReference type="GO" id="GO:0005886">
    <property type="term" value="C:plasma membrane"/>
    <property type="evidence" value="ECO:0007669"/>
    <property type="project" value="UniProtKB-SubCell"/>
</dbReference>
<dbReference type="GO" id="GO:0008495">
    <property type="term" value="F:protoheme IX farnesyltransferase activity"/>
    <property type="evidence" value="ECO:0007669"/>
    <property type="project" value="UniProtKB-UniRule"/>
</dbReference>
<dbReference type="GO" id="GO:0048034">
    <property type="term" value="P:heme O biosynthetic process"/>
    <property type="evidence" value="ECO:0007669"/>
    <property type="project" value="UniProtKB-UniRule"/>
</dbReference>
<dbReference type="CDD" id="cd13957">
    <property type="entry name" value="PT_UbiA_Cox10"/>
    <property type="match status" value="1"/>
</dbReference>
<dbReference type="FunFam" id="1.10.357.140:FF:000001">
    <property type="entry name" value="Protoheme IX farnesyltransferase"/>
    <property type="match status" value="1"/>
</dbReference>
<dbReference type="Gene3D" id="1.10.357.140">
    <property type="entry name" value="UbiA prenyltransferase"/>
    <property type="match status" value="1"/>
</dbReference>
<dbReference type="HAMAP" id="MF_00154">
    <property type="entry name" value="CyoE_CtaB"/>
    <property type="match status" value="1"/>
</dbReference>
<dbReference type="InterPro" id="IPR006369">
    <property type="entry name" value="Protohaem_IX_farnesylTrfase"/>
</dbReference>
<dbReference type="InterPro" id="IPR000537">
    <property type="entry name" value="UbiA_prenyltransferase"/>
</dbReference>
<dbReference type="InterPro" id="IPR044878">
    <property type="entry name" value="UbiA_sf"/>
</dbReference>
<dbReference type="NCBIfam" id="TIGR01473">
    <property type="entry name" value="cyoE_ctaB"/>
    <property type="match status" value="1"/>
</dbReference>
<dbReference type="NCBIfam" id="NF003349">
    <property type="entry name" value="PRK04375.1-2"/>
    <property type="match status" value="1"/>
</dbReference>
<dbReference type="PANTHER" id="PTHR43448:SF7">
    <property type="entry name" value="4-HYDROXYBENZOATE SOLANESYLTRANSFERASE"/>
    <property type="match status" value="1"/>
</dbReference>
<dbReference type="PANTHER" id="PTHR43448">
    <property type="entry name" value="PROTOHEME IX FARNESYLTRANSFERASE, MITOCHONDRIAL"/>
    <property type="match status" value="1"/>
</dbReference>
<dbReference type="Pfam" id="PF01040">
    <property type="entry name" value="UbiA"/>
    <property type="match status" value="1"/>
</dbReference>
<protein>
    <recommendedName>
        <fullName evidence="1">Protoheme IX farnesyltransferase</fullName>
        <ecNumber evidence="1">2.5.1.141</ecNumber>
    </recommendedName>
    <alternativeName>
        <fullName evidence="1">Heme B farnesyltransferase</fullName>
    </alternativeName>
    <alternativeName>
        <fullName evidence="1">Heme O synthase</fullName>
    </alternativeName>
</protein>
<name>COXX_SALTO</name>
<sequence>MSMITERPVSDPAGQSVSATGDGAVGSRRDMRAVVAAYVALTKPRIVELLLVTTVPAMMLAHGGLPSLWLMAVVLVGGSLAAGAASVLNCYIDRDIDQVMRRTKRRPLPAHTVAPRNALIFGLVLATVSVTLLAVFTNALAAGLTLAAILYYDLVYTAWLKRTTTANTFWGGACGAAPVLIGWAAVTGSLAPAAWALFGVVFFWQMPHFYPLAMKYKDDYARAGIPMLPVVASTRRVNAEILVFAWLTVLVSLVTWPLGAGMGPIYGLPTLVVGVIFLVEAHRLCRRAARGEAVKPMRLFHWSTTYLTVVFAAVALDALI</sequence>
<organism>
    <name type="scientific">Salinispora tropica (strain ATCC BAA-916 / DSM 44818 / JCM 13857 / NBRC 105044 / CNB-440)</name>
    <dbReference type="NCBI Taxonomy" id="369723"/>
    <lineage>
        <taxon>Bacteria</taxon>
        <taxon>Bacillati</taxon>
        <taxon>Actinomycetota</taxon>
        <taxon>Actinomycetes</taxon>
        <taxon>Micromonosporales</taxon>
        <taxon>Micromonosporaceae</taxon>
        <taxon>Salinispora</taxon>
    </lineage>
</organism>
<reference key="1">
    <citation type="journal article" date="2007" name="Proc. Natl. Acad. Sci. U.S.A.">
        <title>Genome sequencing reveals complex secondary metabolome in the marine actinomycete Salinispora tropica.</title>
        <authorList>
            <person name="Udwary D.W."/>
            <person name="Zeigler L."/>
            <person name="Asolkar R.N."/>
            <person name="Singan V."/>
            <person name="Lapidus A."/>
            <person name="Fenical W."/>
            <person name="Jensen P.R."/>
            <person name="Moore B.S."/>
        </authorList>
    </citation>
    <scope>NUCLEOTIDE SEQUENCE [LARGE SCALE GENOMIC DNA]</scope>
    <source>
        <strain>ATCC BAA-916 / DSM 44818 / JCM 13857 / NBRC 105044 / CNB-440</strain>
    </source>
</reference>
<comment type="function">
    <text evidence="1">Converts heme B (protoheme IX) to heme O by substitution of the vinyl group on carbon 2 of heme B porphyrin ring with a hydroxyethyl farnesyl side group.</text>
</comment>
<comment type="catalytic activity">
    <reaction evidence="1">
        <text>heme b + (2E,6E)-farnesyl diphosphate + H2O = Fe(II)-heme o + diphosphate</text>
        <dbReference type="Rhea" id="RHEA:28070"/>
        <dbReference type="ChEBI" id="CHEBI:15377"/>
        <dbReference type="ChEBI" id="CHEBI:33019"/>
        <dbReference type="ChEBI" id="CHEBI:60344"/>
        <dbReference type="ChEBI" id="CHEBI:60530"/>
        <dbReference type="ChEBI" id="CHEBI:175763"/>
        <dbReference type="EC" id="2.5.1.141"/>
    </reaction>
</comment>
<comment type="pathway">
    <text evidence="1">Porphyrin-containing compound metabolism; heme O biosynthesis; heme O from protoheme: step 1/1.</text>
</comment>
<comment type="subcellular location">
    <subcellularLocation>
        <location evidence="1">Cell membrane</location>
        <topology evidence="1">Multi-pass membrane protein</topology>
    </subcellularLocation>
</comment>
<comment type="miscellaneous">
    <text evidence="1">Carbon 2 of the heme B porphyrin ring is defined according to the Fischer nomenclature.</text>
</comment>
<comment type="similarity">
    <text evidence="1">Belongs to the UbiA prenyltransferase family. Protoheme IX farnesyltransferase subfamily.</text>
</comment>
<comment type="sequence caution" evidence="3">
    <conflict type="erroneous initiation">
        <sequence resource="EMBL-CDS" id="ABP55525"/>
    </conflict>
</comment>
<gene>
    <name evidence="1" type="primary">ctaB</name>
    <name type="ordered locus">Strop_3088</name>
</gene>